<proteinExistence type="inferred from homology"/>
<feature type="chain" id="PRO_0000401393" description="Pumilio homolog 11">
    <location>
        <begin position="1"/>
        <end position="556"/>
    </location>
</feature>
<feature type="domain" description="PUM-HD" evidence="2">
    <location>
        <begin position="215"/>
        <end position="556"/>
    </location>
</feature>
<feature type="repeat" description="Pumilio 1">
    <location>
        <begin position="238"/>
        <end position="276"/>
    </location>
</feature>
<feature type="repeat" description="Pumilio 2">
    <location>
        <begin position="277"/>
        <end position="313"/>
    </location>
</feature>
<feature type="repeat" description="Pumilio 3">
    <location>
        <begin position="316"/>
        <end position="351"/>
    </location>
</feature>
<feature type="repeat" description="Pumilio 4">
    <location>
        <begin position="353"/>
        <end position="388"/>
    </location>
</feature>
<feature type="repeat" description="Pumilio 5">
    <location>
        <begin position="389"/>
        <end position="424"/>
    </location>
</feature>
<feature type="repeat" description="Pumilio 6">
    <location>
        <begin position="425"/>
        <end position="459"/>
    </location>
</feature>
<feature type="repeat" description="Pumilio 7">
    <location>
        <begin position="460"/>
        <end position="495"/>
    </location>
</feature>
<feature type="repeat" description="Pumilio 8">
    <location>
        <begin position="496"/>
        <end position="531"/>
    </location>
</feature>
<evidence type="ECO:0000250" key="1"/>
<evidence type="ECO:0000255" key="2">
    <source>
        <dbReference type="PROSITE-ProRule" id="PRU00318"/>
    </source>
</evidence>
<evidence type="ECO:0000305" key="3"/>
<keyword id="KW-0963">Cytoplasm</keyword>
<keyword id="KW-1185">Reference proteome</keyword>
<keyword id="KW-0677">Repeat</keyword>
<keyword id="KW-0694">RNA-binding</keyword>
<keyword id="KW-0810">Translation regulation</keyword>
<gene>
    <name type="primary">APUM11</name>
    <name type="ordered locus">At4g08840</name>
    <name type="ORF">T32A17.150</name>
</gene>
<organism>
    <name type="scientific">Arabidopsis thaliana</name>
    <name type="common">Mouse-ear cress</name>
    <dbReference type="NCBI Taxonomy" id="3702"/>
    <lineage>
        <taxon>Eukaryota</taxon>
        <taxon>Viridiplantae</taxon>
        <taxon>Streptophyta</taxon>
        <taxon>Embryophyta</taxon>
        <taxon>Tracheophyta</taxon>
        <taxon>Spermatophyta</taxon>
        <taxon>Magnoliopsida</taxon>
        <taxon>eudicotyledons</taxon>
        <taxon>Gunneridae</taxon>
        <taxon>Pentapetalae</taxon>
        <taxon>rosids</taxon>
        <taxon>malvids</taxon>
        <taxon>Brassicales</taxon>
        <taxon>Brassicaceae</taxon>
        <taxon>Camelineae</taxon>
        <taxon>Arabidopsis</taxon>
    </lineage>
</organism>
<name>PUM11_ARATH</name>
<accession>Q9LDW3</accession>
<comment type="function">
    <text evidence="1">Sequence-specific RNA-binding protein that regulates translation and mRNA stability by binding the 3'-UTR of target mRNAs.</text>
</comment>
<comment type="subcellular location">
    <subcellularLocation>
        <location evidence="3">Cytoplasm</location>
    </subcellularLocation>
</comment>
<comment type="domain">
    <text evidence="1">The pumilio repeats mediate the association with RNA by packing together to form a right-handed superhelix that approximates a half donut. The number as well as the specific sequence of the repeats determine the specificity for target mRNAs (By similarity).</text>
</comment>
<comment type="sequence caution" evidence="3">
    <conflict type="erroneous gene model prediction">
        <sequence resource="EMBL-CDS" id="CAB78009"/>
    </conflict>
</comment>
<comment type="sequence caution" evidence="3">
    <conflict type="erroneous gene model prediction">
        <sequence resource="EMBL-CDS" id="CAB82120"/>
    </conflict>
</comment>
<dbReference type="EMBL" id="AL161513">
    <property type="protein sequence ID" value="CAB78009.1"/>
    <property type="status" value="ALT_SEQ"/>
    <property type="molecule type" value="Genomic_DNA"/>
</dbReference>
<dbReference type="EMBL" id="AL161813">
    <property type="protein sequence ID" value="CAB82120.1"/>
    <property type="status" value="ALT_SEQ"/>
    <property type="molecule type" value="Genomic_DNA"/>
</dbReference>
<dbReference type="EMBL" id="CP002687">
    <property type="protein sequence ID" value="AEE82681.1"/>
    <property type="molecule type" value="Genomic_DNA"/>
</dbReference>
<dbReference type="PIR" id="A85089">
    <property type="entry name" value="A85089"/>
</dbReference>
<dbReference type="RefSeq" id="NP_192624.2">
    <property type="nucleotide sequence ID" value="NM_116954.2"/>
</dbReference>
<dbReference type="SMR" id="Q9LDW3"/>
<dbReference type="STRING" id="3702.Q9LDW3"/>
<dbReference type="iPTMnet" id="Q9LDW3"/>
<dbReference type="PaxDb" id="3702-AT4G08840.1"/>
<dbReference type="EnsemblPlants" id="AT4G08840.1">
    <property type="protein sequence ID" value="AT4G08840.1"/>
    <property type="gene ID" value="AT4G08840"/>
</dbReference>
<dbReference type="GeneID" id="826455"/>
<dbReference type="Gramene" id="AT4G08840.1">
    <property type="protein sequence ID" value="AT4G08840.1"/>
    <property type="gene ID" value="AT4G08840"/>
</dbReference>
<dbReference type="KEGG" id="ath:AT4G08840"/>
<dbReference type="Araport" id="AT4G08840"/>
<dbReference type="TAIR" id="AT4G08840">
    <property type="gene designation" value="PUM11"/>
</dbReference>
<dbReference type="eggNOG" id="KOG2049">
    <property type="taxonomic scope" value="Eukaryota"/>
</dbReference>
<dbReference type="HOGENOM" id="CLU_004017_5_2_1"/>
<dbReference type="InParanoid" id="Q9LDW3"/>
<dbReference type="OMA" id="TCASARF"/>
<dbReference type="PhylomeDB" id="Q9LDW3"/>
<dbReference type="PRO" id="PR:Q9LDW3"/>
<dbReference type="Proteomes" id="UP000006548">
    <property type="component" value="Chromosome 4"/>
</dbReference>
<dbReference type="ExpressionAtlas" id="Q9LDW3">
    <property type="expression patterns" value="baseline and differential"/>
</dbReference>
<dbReference type="GO" id="GO:0005737">
    <property type="term" value="C:cytoplasm"/>
    <property type="evidence" value="ECO:0007669"/>
    <property type="project" value="UniProtKB-SubCell"/>
</dbReference>
<dbReference type="GO" id="GO:0003723">
    <property type="term" value="F:RNA binding"/>
    <property type="evidence" value="ECO:0007669"/>
    <property type="project" value="UniProtKB-KW"/>
</dbReference>
<dbReference type="GO" id="GO:0006417">
    <property type="term" value="P:regulation of translation"/>
    <property type="evidence" value="ECO:0007669"/>
    <property type="project" value="UniProtKB-KW"/>
</dbReference>
<dbReference type="CDD" id="cd07920">
    <property type="entry name" value="Pumilio"/>
    <property type="match status" value="1"/>
</dbReference>
<dbReference type="FunFam" id="1.25.10.10:FF:000237">
    <property type="entry name" value="Pumilio homolog 9"/>
    <property type="match status" value="1"/>
</dbReference>
<dbReference type="Gene3D" id="1.25.10.10">
    <property type="entry name" value="Leucine-rich Repeat Variant"/>
    <property type="match status" value="1"/>
</dbReference>
<dbReference type="InterPro" id="IPR011989">
    <property type="entry name" value="ARM-like"/>
</dbReference>
<dbReference type="InterPro" id="IPR016024">
    <property type="entry name" value="ARM-type_fold"/>
</dbReference>
<dbReference type="InterPro" id="IPR033133">
    <property type="entry name" value="PUM-HD"/>
</dbReference>
<dbReference type="InterPro" id="IPR033712">
    <property type="entry name" value="Pumilio_RNA-bd"/>
</dbReference>
<dbReference type="InterPro" id="IPR001313">
    <property type="entry name" value="Pumilio_RNA-bd_rpt"/>
</dbReference>
<dbReference type="PANTHER" id="PTHR12537:SF131">
    <property type="entry name" value="PUMILIO HOMOLOG 11"/>
    <property type="match status" value="1"/>
</dbReference>
<dbReference type="PANTHER" id="PTHR12537">
    <property type="entry name" value="RNA BINDING PROTEIN PUMILIO-RELATED"/>
    <property type="match status" value="1"/>
</dbReference>
<dbReference type="Pfam" id="PF00806">
    <property type="entry name" value="PUF"/>
    <property type="match status" value="8"/>
</dbReference>
<dbReference type="SMART" id="SM00025">
    <property type="entry name" value="Pumilio"/>
    <property type="match status" value="8"/>
</dbReference>
<dbReference type="SUPFAM" id="SSF48371">
    <property type="entry name" value="ARM repeat"/>
    <property type="match status" value="1"/>
</dbReference>
<dbReference type="PROSITE" id="PS50302">
    <property type="entry name" value="PUM"/>
    <property type="match status" value="7"/>
</dbReference>
<dbReference type="PROSITE" id="PS50303">
    <property type="entry name" value="PUM_HD"/>
    <property type="match status" value="1"/>
</dbReference>
<sequence>MDFGFFPGDLRQRGSFTDLGFNGFPLTSSVSNGFHFSGDRTTNPFLNLRKLDTTSLMADGVDMGLCQNLSKMSISDERSNFFNHSSFSGYGCYQGRESSFHGEASSSMRGFVGYGDVHRFEQDLRVRASFHGESAMSSYVGDGSDYHRLRFLALQEASNPNPRCFTENMSLLNRDYMLELEHFNQQIRRDFSLVPQKSPLAFHEERILPPFSAMGGSRELDGSAKCMKNKEDSLDLASMVDSYGSVYLMAKDQLGCRLLQKFVDEGNFVDVMIIFKEVINNVIELGTDPFGNYLIQKLIEVCNEEQRTQILIRLTSKPGLLVKISINNYGTRVVQKLIETVTTKEQISLVKSALVPGFLSLFRELNGNHVILNCLKFFSPNDNKFILEAATKFCIEIATTRHGCCVLQRCVSYSVGEQHEKLVDEISRNSLLLAQDPFGNYLVQYIIEKKVGGVNVLFELRGNYVKLATQKFGSHVVEKCLRYYPESRSQIVNELVSVLNFGYLLQDPYANYVIQCALSKTKGFVRASLVEKVRRYENLKMTPYCKRIFSKNLWKK</sequence>
<reference key="1">
    <citation type="journal article" date="1999" name="Nature">
        <title>Sequence and analysis of chromosome 4 of the plant Arabidopsis thaliana.</title>
        <authorList>
            <person name="Mayer K.F.X."/>
            <person name="Schueller C."/>
            <person name="Wambutt R."/>
            <person name="Murphy G."/>
            <person name="Volckaert G."/>
            <person name="Pohl T."/>
            <person name="Duesterhoeft A."/>
            <person name="Stiekema W."/>
            <person name="Entian K.-D."/>
            <person name="Terryn N."/>
            <person name="Harris B."/>
            <person name="Ansorge W."/>
            <person name="Brandt P."/>
            <person name="Grivell L.A."/>
            <person name="Rieger M."/>
            <person name="Weichselgartner M."/>
            <person name="de Simone V."/>
            <person name="Obermaier B."/>
            <person name="Mache R."/>
            <person name="Mueller M."/>
            <person name="Kreis M."/>
            <person name="Delseny M."/>
            <person name="Puigdomenech P."/>
            <person name="Watson M."/>
            <person name="Schmidtheini T."/>
            <person name="Reichert B."/>
            <person name="Portetelle D."/>
            <person name="Perez-Alonso M."/>
            <person name="Boutry M."/>
            <person name="Bancroft I."/>
            <person name="Vos P."/>
            <person name="Hoheisel J."/>
            <person name="Zimmermann W."/>
            <person name="Wedler H."/>
            <person name="Ridley P."/>
            <person name="Langham S.-A."/>
            <person name="McCullagh B."/>
            <person name="Bilham L."/>
            <person name="Robben J."/>
            <person name="van der Schueren J."/>
            <person name="Grymonprez B."/>
            <person name="Chuang Y.-J."/>
            <person name="Vandenbussche F."/>
            <person name="Braeken M."/>
            <person name="Weltjens I."/>
            <person name="Voet M."/>
            <person name="Bastiaens I."/>
            <person name="Aert R."/>
            <person name="Defoor E."/>
            <person name="Weitzenegger T."/>
            <person name="Bothe G."/>
            <person name="Ramsperger U."/>
            <person name="Hilbert H."/>
            <person name="Braun M."/>
            <person name="Holzer E."/>
            <person name="Brandt A."/>
            <person name="Peters S."/>
            <person name="van Staveren M."/>
            <person name="Dirkse W."/>
            <person name="Mooijman P."/>
            <person name="Klein Lankhorst R."/>
            <person name="Rose M."/>
            <person name="Hauf J."/>
            <person name="Koetter P."/>
            <person name="Berneiser S."/>
            <person name="Hempel S."/>
            <person name="Feldpausch M."/>
            <person name="Lamberth S."/>
            <person name="Van den Daele H."/>
            <person name="De Keyser A."/>
            <person name="Buysshaert C."/>
            <person name="Gielen J."/>
            <person name="Villarroel R."/>
            <person name="De Clercq R."/>
            <person name="van Montagu M."/>
            <person name="Rogers J."/>
            <person name="Cronin A."/>
            <person name="Quail M.A."/>
            <person name="Bray-Allen S."/>
            <person name="Clark L."/>
            <person name="Doggett J."/>
            <person name="Hall S."/>
            <person name="Kay M."/>
            <person name="Lennard N."/>
            <person name="McLay K."/>
            <person name="Mayes R."/>
            <person name="Pettett A."/>
            <person name="Rajandream M.A."/>
            <person name="Lyne M."/>
            <person name="Benes V."/>
            <person name="Rechmann S."/>
            <person name="Borkova D."/>
            <person name="Bloecker H."/>
            <person name="Scharfe M."/>
            <person name="Grimm M."/>
            <person name="Loehnert T.-H."/>
            <person name="Dose S."/>
            <person name="de Haan M."/>
            <person name="Maarse A.C."/>
            <person name="Schaefer M."/>
            <person name="Mueller-Auer S."/>
            <person name="Gabel C."/>
            <person name="Fuchs M."/>
            <person name="Fartmann B."/>
            <person name="Granderath K."/>
            <person name="Dauner D."/>
            <person name="Herzl A."/>
            <person name="Neumann S."/>
            <person name="Argiriou A."/>
            <person name="Vitale D."/>
            <person name="Liguori R."/>
            <person name="Piravandi E."/>
            <person name="Massenet O."/>
            <person name="Quigley F."/>
            <person name="Clabauld G."/>
            <person name="Muendlein A."/>
            <person name="Felber R."/>
            <person name="Schnabl S."/>
            <person name="Hiller R."/>
            <person name="Schmidt W."/>
            <person name="Lecharny A."/>
            <person name="Aubourg S."/>
            <person name="Chefdor F."/>
            <person name="Cooke R."/>
            <person name="Berger C."/>
            <person name="Monfort A."/>
            <person name="Casacuberta E."/>
            <person name="Gibbons T."/>
            <person name="Weber N."/>
            <person name="Vandenbol M."/>
            <person name="Bargues M."/>
            <person name="Terol J."/>
            <person name="Torres A."/>
            <person name="Perez-Perez A."/>
            <person name="Purnelle B."/>
            <person name="Bent E."/>
            <person name="Johnson S."/>
            <person name="Tacon D."/>
            <person name="Jesse T."/>
            <person name="Heijnen L."/>
            <person name="Schwarz S."/>
            <person name="Scholler P."/>
            <person name="Heber S."/>
            <person name="Francs P."/>
            <person name="Bielke C."/>
            <person name="Frishman D."/>
            <person name="Haase D."/>
            <person name="Lemcke K."/>
            <person name="Mewes H.-W."/>
            <person name="Stocker S."/>
            <person name="Zaccaria P."/>
            <person name="Bevan M."/>
            <person name="Wilson R.K."/>
            <person name="de la Bastide M."/>
            <person name="Habermann K."/>
            <person name="Parnell L."/>
            <person name="Dedhia N."/>
            <person name="Gnoj L."/>
            <person name="Schutz K."/>
            <person name="Huang E."/>
            <person name="Spiegel L."/>
            <person name="Sekhon M."/>
            <person name="Murray J."/>
            <person name="Sheet P."/>
            <person name="Cordes M."/>
            <person name="Abu-Threideh J."/>
            <person name="Stoneking T."/>
            <person name="Kalicki J."/>
            <person name="Graves T."/>
            <person name="Harmon G."/>
            <person name="Edwards J."/>
            <person name="Latreille P."/>
            <person name="Courtney L."/>
            <person name="Cloud J."/>
            <person name="Abbott A."/>
            <person name="Scott K."/>
            <person name="Johnson D."/>
            <person name="Minx P."/>
            <person name="Bentley D."/>
            <person name="Fulton B."/>
            <person name="Miller N."/>
            <person name="Greco T."/>
            <person name="Kemp K."/>
            <person name="Kramer J."/>
            <person name="Fulton L."/>
            <person name="Mardis E."/>
            <person name="Dante M."/>
            <person name="Pepin K."/>
            <person name="Hillier L.W."/>
            <person name="Nelson J."/>
            <person name="Spieth J."/>
            <person name="Ryan E."/>
            <person name="Andrews S."/>
            <person name="Geisel C."/>
            <person name="Layman D."/>
            <person name="Du H."/>
            <person name="Ali J."/>
            <person name="Berghoff A."/>
            <person name="Jones K."/>
            <person name="Drone K."/>
            <person name="Cotton M."/>
            <person name="Joshu C."/>
            <person name="Antonoiu B."/>
            <person name="Zidanic M."/>
            <person name="Strong C."/>
            <person name="Sun H."/>
            <person name="Lamar B."/>
            <person name="Yordan C."/>
            <person name="Ma P."/>
            <person name="Zhong J."/>
            <person name="Preston R."/>
            <person name="Vil D."/>
            <person name="Shekher M."/>
            <person name="Matero A."/>
            <person name="Shah R."/>
            <person name="Swaby I.K."/>
            <person name="O'Shaughnessy A."/>
            <person name="Rodriguez M."/>
            <person name="Hoffman J."/>
            <person name="Till S."/>
            <person name="Granat S."/>
            <person name="Shohdy N."/>
            <person name="Hasegawa A."/>
            <person name="Hameed A."/>
            <person name="Lodhi M."/>
            <person name="Johnson A."/>
            <person name="Chen E."/>
            <person name="Marra M.A."/>
            <person name="Martienssen R."/>
            <person name="McCombie W.R."/>
        </authorList>
    </citation>
    <scope>NUCLEOTIDE SEQUENCE [LARGE SCALE GENOMIC DNA]</scope>
    <source>
        <strain>cv. Columbia</strain>
    </source>
</reference>
<reference key="2">
    <citation type="journal article" date="2017" name="Plant J.">
        <title>Araport11: a complete reannotation of the Arabidopsis thaliana reference genome.</title>
        <authorList>
            <person name="Cheng C.Y."/>
            <person name="Krishnakumar V."/>
            <person name="Chan A.P."/>
            <person name="Thibaud-Nissen F."/>
            <person name="Schobel S."/>
            <person name="Town C.D."/>
        </authorList>
    </citation>
    <scope>GENOME REANNOTATION</scope>
    <source>
        <strain>cv. Columbia</strain>
    </source>
</reference>
<reference key="3">
    <citation type="journal article" date="2009" name="FEBS J.">
        <title>Molecular characterization of Arabidopsis thaliana PUF proteins -- binding specificity and target candidates.</title>
        <authorList>
            <person name="Francischini C.W."/>
            <person name="Quaggio R.B."/>
        </authorList>
    </citation>
    <scope>GENE FAMILY</scope>
</reference>
<reference key="4">
    <citation type="journal article" date="2010" name="BMC Plant Biol.">
        <title>The Puf family of RNA-binding proteins in plants: phylogeny, structural modeling, activity and subcellular localization.</title>
        <authorList>
            <person name="Tam P.P."/>
            <person name="Barrette-Ng I.H."/>
            <person name="Simon D.M."/>
            <person name="Tam M.W."/>
            <person name="Ang A.L."/>
            <person name="Muench D.G."/>
        </authorList>
    </citation>
    <scope>GENE FAMILY</scope>
</reference>
<protein>
    <recommendedName>
        <fullName>Pumilio homolog 11</fullName>
        <shortName>APUM-11</shortName>
        <shortName>AtPUM11</shortName>
    </recommendedName>
</protein>